<name>RBS1_YEAST</name>
<evidence type="ECO:0000255" key="1">
    <source>
        <dbReference type="PROSITE-ProRule" id="PRU00382"/>
    </source>
</evidence>
<evidence type="ECO:0000256" key="2">
    <source>
        <dbReference type="SAM" id="MobiDB-lite"/>
    </source>
</evidence>
<evidence type="ECO:0000269" key="3">
    <source>
    </source>
</evidence>
<evidence type="ECO:0000269" key="4">
    <source>
    </source>
</evidence>
<evidence type="ECO:0000305" key="5"/>
<evidence type="ECO:0007744" key="6">
    <source>
    </source>
</evidence>
<evidence type="ECO:0007744" key="7">
    <source>
    </source>
</evidence>
<evidence type="ECO:0007744" key="8">
    <source>
    </source>
</evidence>
<feature type="chain" id="PRO_0000076298" description="RNA-binding suppressor of PAS kinase protein 1">
    <location>
        <begin position="1"/>
        <end position="457"/>
    </location>
</feature>
<feature type="domain" description="R3H" evidence="1">
    <location>
        <begin position="26"/>
        <end position="88"/>
    </location>
</feature>
<feature type="region of interest" description="Disordered" evidence="2">
    <location>
        <begin position="142"/>
        <end position="181"/>
    </location>
</feature>
<feature type="region of interest" description="Disordered" evidence="2">
    <location>
        <begin position="195"/>
        <end position="291"/>
    </location>
</feature>
<feature type="region of interest" description="Disordered" evidence="2">
    <location>
        <begin position="406"/>
        <end position="457"/>
    </location>
</feature>
<feature type="compositionally biased region" description="Polar residues" evidence="2">
    <location>
        <begin position="145"/>
        <end position="158"/>
    </location>
</feature>
<feature type="compositionally biased region" description="Basic and acidic residues" evidence="2">
    <location>
        <begin position="159"/>
        <end position="181"/>
    </location>
</feature>
<feature type="compositionally biased region" description="Low complexity" evidence="2">
    <location>
        <begin position="226"/>
        <end position="247"/>
    </location>
</feature>
<feature type="compositionally biased region" description="Polar residues" evidence="2">
    <location>
        <begin position="248"/>
        <end position="258"/>
    </location>
</feature>
<feature type="compositionally biased region" description="Basic and acidic residues" evidence="2">
    <location>
        <begin position="418"/>
        <end position="435"/>
    </location>
</feature>
<feature type="compositionally biased region" description="Basic and acidic residues" evidence="2">
    <location>
        <begin position="443"/>
        <end position="457"/>
    </location>
</feature>
<feature type="modified residue" description="Phosphoserine" evidence="7">
    <location>
        <position position="198"/>
    </location>
</feature>
<feature type="modified residue" description="Phosphoserine" evidence="6 7">
    <location>
        <position position="435"/>
    </location>
</feature>
<feature type="modified residue" description="Phosphoserine" evidence="6 7">
    <location>
        <position position="439"/>
    </location>
</feature>
<feature type="modified residue" description="Phosphoserine" evidence="8">
    <location>
        <position position="447"/>
    </location>
</feature>
<feature type="sequence conflict" description="In Ref. 4; AAP04344." evidence="5" ref="4">
    <original>MTA</original>
    <variation>MRVSLSVSSFFHIQLDKFWRRQLSHIVPASRGDT</variation>
    <location>
        <begin position="1"/>
        <end position="3"/>
    </location>
</feature>
<feature type="sequence conflict" description="In Ref. 4; AAP04344." evidence="5" ref="4">
    <original>N</original>
    <variation>S</variation>
    <location>
        <position position="43"/>
    </location>
</feature>
<feature type="sequence conflict" description="In Ref. 4; AAP04344." evidence="5" ref="4">
    <original>V</original>
    <variation>A</variation>
    <location>
        <position position="81"/>
    </location>
</feature>
<protein>
    <recommendedName>
        <fullName>RNA-binding suppressor of PAS kinase protein 1</fullName>
    </recommendedName>
</protein>
<proteinExistence type="evidence at protein level"/>
<accession>Q05672</accession>
<accession>D6VRG4</accession>
<accession>Q06896</accession>
<accession>Q07619</accession>
<accession>Q870H2</accession>
<reference key="1">
    <citation type="journal article" date="1995" name="Yeast">
        <title>New open reading frames, one of which is similar to the nifV gene of Azotobacter vinelandii, found on a 12.5 kbp fragment of chromosome IV of Saccharomyces cerevisiae.</title>
        <authorList>
            <person name="Verhasselt P."/>
            <person name="Voet M."/>
            <person name="Volckaert G."/>
        </authorList>
    </citation>
    <scope>NUCLEOTIDE SEQUENCE [GENOMIC DNA]</scope>
    <source>
        <strain>ATCC 96604 / S288c / FY1679</strain>
    </source>
</reference>
<reference key="2">
    <citation type="journal article" date="1997" name="Nature">
        <title>The nucleotide sequence of Saccharomyces cerevisiae chromosome IV.</title>
        <authorList>
            <person name="Jacq C."/>
            <person name="Alt-Moerbe J."/>
            <person name="Andre B."/>
            <person name="Arnold W."/>
            <person name="Bahr A."/>
            <person name="Ballesta J.P.G."/>
            <person name="Bargues M."/>
            <person name="Baron L."/>
            <person name="Becker A."/>
            <person name="Biteau N."/>
            <person name="Bloecker H."/>
            <person name="Blugeon C."/>
            <person name="Boskovic J."/>
            <person name="Brandt P."/>
            <person name="Brueckner M."/>
            <person name="Buitrago M.J."/>
            <person name="Coster F."/>
            <person name="Delaveau T."/>
            <person name="del Rey F."/>
            <person name="Dujon B."/>
            <person name="Eide L.G."/>
            <person name="Garcia-Cantalejo J.M."/>
            <person name="Goffeau A."/>
            <person name="Gomez-Peris A."/>
            <person name="Granotier C."/>
            <person name="Hanemann V."/>
            <person name="Hankeln T."/>
            <person name="Hoheisel J.D."/>
            <person name="Jaeger W."/>
            <person name="Jimenez A."/>
            <person name="Jonniaux J.-L."/>
            <person name="Kraemer C."/>
            <person name="Kuester H."/>
            <person name="Laamanen P."/>
            <person name="Legros Y."/>
            <person name="Louis E.J."/>
            <person name="Moeller-Rieker S."/>
            <person name="Monnet A."/>
            <person name="Moro M."/>
            <person name="Mueller-Auer S."/>
            <person name="Nussbaumer B."/>
            <person name="Paricio N."/>
            <person name="Paulin L."/>
            <person name="Perea J."/>
            <person name="Perez-Alonso M."/>
            <person name="Perez-Ortin J.E."/>
            <person name="Pohl T.M."/>
            <person name="Prydz H."/>
            <person name="Purnelle B."/>
            <person name="Rasmussen S.W."/>
            <person name="Remacha M.A."/>
            <person name="Revuelta J.L."/>
            <person name="Rieger M."/>
            <person name="Salom D."/>
            <person name="Saluz H.P."/>
            <person name="Saiz J.E."/>
            <person name="Saren A.-M."/>
            <person name="Schaefer M."/>
            <person name="Scharfe M."/>
            <person name="Schmidt E.R."/>
            <person name="Schneider C."/>
            <person name="Scholler P."/>
            <person name="Schwarz S."/>
            <person name="Soler-Mira A."/>
            <person name="Urrestarazu L.A."/>
            <person name="Verhasselt P."/>
            <person name="Vissers S."/>
            <person name="Voet M."/>
            <person name="Volckaert G."/>
            <person name="Wagner G."/>
            <person name="Wambutt R."/>
            <person name="Wedler E."/>
            <person name="Wedler H."/>
            <person name="Woelfl S."/>
            <person name="Harris D.E."/>
            <person name="Bowman S."/>
            <person name="Brown D."/>
            <person name="Churcher C.M."/>
            <person name="Connor R."/>
            <person name="Dedman K."/>
            <person name="Gentles S."/>
            <person name="Hamlin N."/>
            <person name="Hunt S."/>
            <person name="Jones L."/>
            <person name="McDonald S."/>
            <person name="Murphy L.D."/>
            <person name="Niblett D."/>
            <person name="Odell C."/>
            <person name="Oliver K."/>
            <person name="Rajandream M.A."/>
            <person name="Richards C."/>
            <person name="Shore L."/>
            <person name="Walsh S.V."/>
            <person name="Barrell B.G."/>
            <person name="Dietrich F.S."/>
            <person name="Mulligan J.T."/>
            <person name="Allen E."/>
            <person name="Araujo R."/>
            <person name="Aviles E."/>
            <person name="Berno A."/>
            <person name="Carpenter J."/>
            <person name="Chen E."/>
            <person name="Cherry J.M."/>
            <person name="Chung E."/>
            <person name="Duncan M."/>
            <person name="Hunicke-Smith S."/>
            <person name="Hyman R.W."/>
            <person name="Komp C."/>
            <person name="Lashkari D."/>
            <person name="Lew H."/>
            <person name="Lin D."/>
            <person name="Mosedale D."/>
            <person name="Nakahara K."/>
            <person name="Namath A."/>
            <person name="Oefner P."/>
            <person name="Oh C."/>
            <person name="Petel F.X."/>
            <person name="Roberts D."/>
            <person name="Schramm S."/>
            <person name="Schroeder M."/>
            <person name="Shogren T."/>
            <person name="Shroff N."/>
            <person name="Winant A."/>
            <person name="Yelton M.A."/>
            <person name="Botstein D."/>
            <person name="Davis R.W."/>
            <person name="Johnston M."/>
            <person name="Andrews S."/>
            <person name="Brinkman R."/>
            <person name="Cooper J."/>
            <person name="Ding H."/>
            <person name="Du Z."/>
            <person name="Favello A."/>
            <person name="Fulton L."/>
            <person name="Gattung S."/>
            <person name="Greco T."/>
            <person name="Hallsworth K."/>
            <person name="Hawkins J."/>
            <person name="Hillier L.W."/>
            <person name="Jier M."/>
            <person name="Johnson D."/>
            <person name="Johnston L."/>
            <person name="Kirsten J."/>
            <person name="Kucaba T."/>
            <person name="Langston Y."/>
            <person name="Latreille P."/>
            <person name="Le T."/>
            <person name="Mardis E."/>
            <person name="Menezes S."/>
            <person name="Miller N."/>
            <person name="Nhan M."/>
            <person name="Pauley A."/>
            <person name="Peluso D."/>
            <person name="Rifkin L."/>
            <person name="Riles L."/>
            <person name="Taich A."/>
            <person name="Trevaskis E."/>
            <person name="Vignati D."/>
            <person name="Wilcox L."/>
            <person name="Wohldman P."/>
            <person name="Vaudin M."/>
            <person name="Wilson R."/>
            <person name="Waterston R."/>
            <person name="Albermann K."/>
            <person name="Hani J."/>
            <person name="Heumann K."/>
            <person name="Kleine K."/>
            <person name="Mewes H.-W."/>
            <person name="Zollner A."/>
            <person name="Zaccaria P."/>
        </authorList>
    </citation>
    <scope>NUCLEOTIDE SEQUENCE [LARGE SCALE GENOMIC DNA]</scope>
    <source>
        <strain>ATCC 204508 / S288c</strain>
    </source>
</reference>
<reference key="3">
    <citation type="journal article" date="2014" name="G3 (Bethesda)">
        <title>The reference genome sequence of Saccharomyces cerevisiae: Then and now.</title>
        <authorList>
            <person name="Engel S.R."/>
            <person name="Dietrich F.S."/>
            <person name="Fisk D.G."/>
            <person name="Binkley G."/>
            <person name="Balakrishnan R."/>
            <person name="Costanzo M.C."/>
            <person name="Dwight S.S."/>
            <person name="Hitz B.C."/>
            <person name="Karra K."/>
            <person name="Nash R.S."/>
            <person name="Weng S."/>
            <person name="Wong E.D."/>
            <person name="Lloyd P."/>
            <person name="Skrzypek M.S."/>
            <person name="Miyasato S.R."/>
            <person name="Simison M."/>
            <person name="Cherry J.M."/>
        </authorList>
    </citation>
    <scope>GENOME REANNOTATION</scope>
    <source>
        <strain>ATCC 204508 / S288c</strain>
    </source>
</reference>
<reference key="4">
    <citation type="journal article" date="2003" name="Genome Biol.">
        <title>Reinvestigation of the Saccharomyces cerevisiae genome annotation by comparison to the genome of a related fungus: Ashbya gossypii.</title>
        <authorList>
            <person name="Brachat S."/>
            <person name="Dietrich F.S."/>
            <person name="Voegeli S."/>
            <person name="Zhang Z."/>
            <person name="Stuart L."/>
            <person name="Lerch A."/>
            <person name="Gates K."/>
            <person name="Gaffney T.D."/>
            <person name="Philippsen P."/>
        </authorList>
    </citation>
    <scope>NUCLEOTIDE SEQUENCE [MRNA] OF 1-119</scope>
    <source>
        <strain>ATCC 204511 / S288c / AB972</strain>
    </source>
</reference>
<reference key="5">
    <citation type="journal article" date="1991" name="Mol. Cell. Biol.">
        <title>Protein phosphatase 2A in Saccharomyces cerevisiae: effects on cell growth and bud morphogenesis.</title>
        <authorList>
            <person name="Ronne H."/>
            <person name="Carlberg M."/>
            <person name="Hu G.-Z."/>
            <person name="Nehlin J.O."/>
        </authorList>
    </citation>
    <scope>NUCLEOTIDE SEQUENCE [GENOMIC DNA] OF 165-457</scope>
    <source>
        <strain>ATCC 208353 / W303-1A</strain>
    </source>
</reference>
<reference key="6">
    <citation type="journal article" date="2003" name="Nature">
        <title>Global analysis of protein localization in budding yeast.</title>
        <authorList>
            <person name="Huh W.-K."/>
            <person name="Falvo J.V."/>
            <person name="Gerke L.C."/>
            <person name="Carroll A.S."/>
            <person name="Howson R.W."/>
            <person name="Weissman J.S."/>
            <person name="O'Shea E.K."/>
        </authorList>
    </citation>
    <scope>SUBCELLULAR LOCATION [LARGE SCALE ANALYSIS]</scope>
</reference>
<reference key="7">
    <citation type="journal article" date="2003" name="Nature">
        <title>Global analysis of protein expression in yeast.</title>
        <authorList>
            <person name="Ghaemmaghami S."/>
            <person name="Huh W.-K."/>
            <person name="Bower K."/>
            <person name="Howson R.W."/>
            <person name="Belle A."/>
            <person name="Dephoure N."/>
            <person name="O'Shea E.K."/>
            <person name="Weissman J.S."/>
        </authorList>
    </citation>
    <scope>LEVEL OF PROTEIN EXPRESSION [LARGE SCALE ANALYSIS]</scope>
</reference>
<reference key="8">
    <citation type="journal article" date="2007" name="Proc. Natl. Acad. Sci. U.S.A.">
        <title>Analysis of phosphorylation sites on proteins from Saccharomyces cerevisiae by electron transfer dissociation (ETD) mass spectrometry.</title>
        <authorList>
            <person name="Chi A."/>
            <person name="Huttenhower C."/>
            <person name="Geer L.Y."/>
            <person name="Coon J.J."/>
            <person name="Syka J.E.P."/>
            <person name="Bai D.L."/>
            <person name="Shabanowitz J."/>
            <person name="Burke D.J."/>
            <person name="Troyanskaya O.G."/>
            <person name="Hunt D.F."/>
        </authorList>
    </citation>
    <scope>PHOSPHORYLATION [LARGE SCALE ANALYSIS] AT SER-435 AND SER-439</scope>
    <scope>IDENTIFICATION BY MASS SPECTROMETRY [LARGE SCALE ANALYSIS]</scope>
</reference>
<reference key="9">
    <citation type="journal article" date="2008" name="Mol. Cell. Proteomics">
        <title>A multidimensional chromatography technology for in-depth phosphoproteome analysis.</title>
        <authorList>
            <person name="Albuquerque C.P."/>
            <person name="Smolka M.B."/>
            <person name="Payne S.H."/>
            <person name="Bafna V."/>
            <person name="Eng J."/>
            <person name="Zhou H."/>
        </authorList>
    </citation>
    <scope>PHOSPHORYLATION [LARGE SCALE ANALYSIS] AT SER-198; SER-435 AND SER-439</scope>
    <scope>IDENTIFICATION BY MASS SPECTROMETRY [LARGE SCALE ANALYSIS]</scope>
</reference>
<reference key="10">
    <citation type="journal article" date="2009" name="Science">
        <title>Global analysis of Cdk1 substrate phosphorylation sites provides insights into evolution.</title>
        <authorList>
            <person name="Holt L.J."/>
            <person name="Tuch B.B."/>
            <person name="Villen J."/>
            <person name="Johnson A.D."/>
            <person name="Gygi S.P."/>
            <person name="Morgan D.O."/>
        </authorList>
    </citation>
    <scope>PHOSPHORYLATION [LARGE SCALE ANALYSIS] AT SER-447</scope>
    <scope>IDENTIFICATION BY MASS SPECTROMETRY [LARGE SCALE ANALYSIS]</scope>
</reference>
<sequence>MTALDSRNWGLTPAMETGLFQKPQDRIFIIELENSIVSFINSNTESFQLRPMNSYYRLLSHQIAEYHNLNHVLARTQDSCVILFKGENFQKIEGKPLLQELQLNKKPEECASSSESIEKSNNNRIFRILKRKEVGNECDYKIDGNTRTPNSNLTANSNKDQKIEIDDKSSTDLEQERIEKERLYEQRKQEIFDKLNKSEDDVKSTNSSGSSDSDNEWSDWLNGDDSNTQTSNGSVSSSSPFNSSVTTIQVNKPQQQFYDSRRGRGGRRRGTNNYKDAYRGQSRRNKENGGYQSGYSSPYLVYPPPQMGGNSLPTYPLMYNPAGPAPGPAPSPMVMGNNTVFMNPYMYNMNPQGSCSFGTPIPMYPPYQYQYQYQYNTQYHSGPYSNTPSYNSNNYTRSSANKYHHFQGKNSYSGAIPKRSDDSNSNKNEGIRRASVEGSPSSRDTDSVEMKFDKLNI</sequence>
<organism>
    <name type="scientific">Saccharomyces cerevisiae (strain ATCC 204508 / S288c)</name>
    <name type="common">Baker's yeast</name>
    <dbReference type="NCBI Taxonomy" id="559292"/>
    <lineage>
        <taxon>Eukaryota</taxon>
        <taxon>Fungi</taxon>
        <taxon>Dikarya</taxon>
        <taxon>Ascomycota</taxon>
        <taxon>Saccharomycotina</taxon>
        <taxon>Saccharomycetes</taxon>
        <taxon>Saccharomycetales</taxon>
        <taxon>Saccharomycetaceae</taxon>
        <taxon>Saccharomyces</taxon>
    </lineage>
</organism>
<comment type="subcellular location">
    <subcellularLocation>
        <location evidence="3">Cytoplasm</location>
    </subcellularLocation>
</comment>
<comment type="miscellaneous">
    <text evidence="4">Present with 892 molecules/cell in log phase SD medium.</text>
</comment>
<comment type="sequence caution" evidence="5">
    <conflict type="frameshift">
        <sequence resource="EMBL-CDS" id="CAA41660"/>
    </conflict>
</comment>
<gene>
    <name type="primary">RBS1</name>
    <name type="ordered locus">YDL189W</name>
    <name type="ORF">D1266</name>
</gene>
<keyword id="KW-0963">Cytoplasm</keyword>
<keyword id="KW-0597">Phosphoprotein</keyword>
<keyword id="KW-1185">Reference proteome</keyword>
<keyword id="KW-0694">RNA-binding</keyword>
<dbReference type="EMBL" id="X83276">
    <property type="protein sequence ID" value="CAA58258.1"/>
    <property type="molecule type" value="Genomic_DNA"/>
</dbReference>
<dbReference type="EMBL" id="Z74237">
    <property type="protein sequence ID" value="CAA98766.1"/>
    <property type="molecule type" value="Genomic_DNA"/>
</dbReference>
<dbReference type="EMBL" id="AY245794">
    <property type="protein sequence ID" value="AAP04344.1"/>
    <property type="molecule type" value="mRNA"/>
</dbReference>
<dbReference type="EMBL" id="X58857">
    <property type="protein sequence ID" value="CAA41660.1"/>
    <property type="status" value="ALT_FRAME"/>
    <property type="molecule type" value="Genomic_DNA"/>
</dbReference>
<dbReference type="EMBL" id="BK006938">
    <property type="protein sequence ID" value="DAA11674.1"/>
    <property type="molecule type" value="Genomic_DNA"/>
</dbReference>
<dbReference type="PIR" id="S67744">
    <property type="entry name" value="S67744"/>
</dbReference>
<dbReference type="RefSeq" id="NP_010092.2">
    <property type="nucleotide sequence ID" value="NM_001180249.1"/>
</dbReference>
<dbReference type="SMR" id="Q05672"/>
<dbReference type="BioGRID" id="31856">
    <property type="interactions" value="82"/>
</dbReference>
<dbReference type="DIP" id="DIP-2980N"/>
<dbReference type="FunCoup" id="Q05672">
    <property type="interactions" value="72"/>
</dbReference>
<dbReference type="IntAct" id="Q05672">
    <property type="interactions" value="13"/>
</dbReference>
<dbReference type="MINT" id="Q05672"/>
<dbReference type="STRING" id="4932.YDL189W"/>
<dbReference type="iPTMnet" id="Q05672"/>
<dbReference type="PaxDb" id="4932-YDL189W"/>
<dbReference type="PeptideAtlas" id="Q05672"/>
<dbReference type="EnsemblFungi" id="YDL189W_mRNA">
    <property type="protein sequence ID" value="YDL189W"/>
    <property type="gene ID" value="YDL189W"/>
</dbReference>
<dbReference type="GeneID" id="851338"/>
<dbReference type="KEGG" id="sce:YDL189W"/>
<dbReference type="AGR" id="SGD:S000002348"/>
<dbReference type="SGD" id="S000002348">
    <property type="gene designation" value="RBS1"/>
</dbReference>
<dbReference type="VEuPathDB" id="FungiDB:YDL189W"/>
<dbReference type="eggNOG" id="KOG2953">
    <property type="taxonomic scope" value="Eukaryota"/>
</dbReference>
<dbReference type="HOGENOM" id="CLU_598720_0_0_1"/>
<dbReference type="InParanoid" id="Q05672"/>
<dbReference type="OMA" id="TESFQLR"/>
<dbReference type="OrthoDB" id="278430at2759"/>
<dbReference type="BioCyc" id="YEAST:G3O-29574-MONOMER"/>
<dbReference type="BioGRID-ORCS" id="851338">
    <property type="hits" value="1 hit in 10 CRISPR screens"/>
</dbReference>
<dbReference type="PRO" id="PR:Q05672"/>
<dbReference type="Proteomes" id="UP000002311">
    <property type="component" value="Chromosome IV"/>
</dbReference>
<dbReference type="RNAct" id="Q05672">
    <property type="molecule type" value="protein"/>
</dbReference>
<dbReference type="GO" id="GO:0005737">
    <property type="term" value="C:cytoplasm"/>
    <property type="evidence" value="ECO:0007005"/>
    <property type="project" value="SGD"/>
</dbReference>
<dbReference type="GO" id="GO:0005634">
    <property type="term" value="C:nucleus"/>
    <property type="evidence" value="ECO:0000314"/>
    <property type="project" value="SGD"/>
</dbReference>
<dbReference type="GO" id="GO:0048027">
    <property type="term" value="F:mRNA 5'-UTR binding"/>
    <property type="evidence" value="ECO:0000314"/>
    <property type="project" value="SGD"/>
</dbReference>
<dbReference type="GO" id="GO:0006012">
    <property type="term" value="P:galactose metabolic process"/>
    <property type="evidence" value="ECO:0000316"/>
    <property type="project" value="SGD"/>
</dbReference>
<dbReference type="GO" id="GO:1990115">
    <property type="term" value="P:RNA polymerase III assembly"/>
    <property type="evidence" value="ECO:0000315"/>
    <property type="project" value="SGD"/>
</dbReference>
<dbReference type="CDD" id="cd02642">
    <property type="entry name" value="R3H_encore_like"/>
    <property type="match status" value="1"/>
</dbReference>
<dbReference type="Gene3D" id="3.30.1370.50">
    <property type="entry name" value="R3H-like domain"/>
    <property type="match status" value="1"/>
</dbReference>
<dbReference type="InterPro" id="IPR001374">
    <property type="entry name" value="R3H_dom"/>
</dbReference>
<dbReference type="InterPro" id="IPR036867">
    <property type="entry name" value="R3H_dom_sf"/>
</dbReference>
<dbReference type="InterPro" id="IPR051937">
    <property type="entry name" value="R3H_domain_containing"/>
</dbReference>
<dbReference type="PANTHER" id="PTHR15672">
    <property type="entry name" value="CAMP-REGULATED PHOSPHOPROTEIN 21 RELATED R3H DOMAIN CONTAINING PROTEIN"/>
    <property type="match status" value="1"/>
</dbReference>
<dbReference type="PANTHER" id="PTHR15672:SF8">
    <property type="entry name" value="PROTEIN ENCORE"/>
    <property type="match status" value="1"/>
</dbReference>
<dbReference type="Pfam" id="PF01424">
    <property type="entry name" value="R3H"/>
    <property type="match status" value="1"/>
</dbReference>
<dbReference type="SMART" id="SM00393">
    <property type="entry name" value="R3H"/>
    <property type="match status" value="1"/>
</dbReference>
<dbReference type="SUPFAM" id="SSF82708">
    <property type="entry name" value="R3H domain"/>
    <property type="match status" value="1"/>
</dbReference>
<dbReference type="PROSITE" id="PS51061">
    <property type="entry name" value="R3H"/>
    <property type="match status" value="1"/>
</dbReference>